<dbReference type="EC" id="2.1.1.181" evidence="1"/>
<dbReference type="EMBL" id="AE006468">
    <property type="protein sequence ID" value="AAL19762.1"/>
    <property type="molecule type" value="Genomic_DNA"/>
</dbReference>
<dbReference type="RefSeq" id="WP_001275962.1">
    <property type="nucleotide sequence ID" value="NC_003197.2"/>
</dbReference>
<dbReference type="SMR" id="Q8ZQN4"/>
<dbReference type="STRING" id="99287.STM0826"/>
<dbReference type="PaxDb" id="99287-STM0826"/>
<dbReference type="KEGG" id="stm:STM0826"/>
<dbReference type="PATRIC" id="fig|99287.12.peg.860"/>
<dbReference type="HOGENOM" id="CLU_027534_3_0_6"/>
<dbReference type="OMA" id="HQGRYDF"/>
<dbReference type="PhylomeDB" id="Q8ZQN4"/>
<dbReference type="BioCyc" id="SENT99287:STM0826-MONOMER"/>
<dbReference type="Proteomes" id="UP000001014">
    <property type="component" value="Chromosome"/>
</dbReference>
<dbReference type="GO" id="GO:0005737">
    <property type="term" value="C:cytoplasm"/>
    <property type="evidence" value="ECO:0007669"/>
    <property type="project" value="UniProtKB-SubCell"/>
</dbReference>
<dbReference type="GO" id="GO:0052907">
    <property type="term" value="F:23S rRNA (adenine(1618)-N(6))-methyltransferase activity"/>
    <property type="evidence" value="ECO:0000318"/>
    <property type="project" value="GO_Central"/>
</dbReference>
<dbReference type="GO" id="GO:0070475">
    <property type="term" value="P:rRNA base methylation"/>
    <property type="evidence" value="ECO:0000318"/>
    <property type="project" value="GO_Central"/>
</dbReference>
<dbReference type="FunFam" id="3.40.50.150:FF:000045">
    <property type="entry name" value="Ribosomal RNA large subunit methyltransferase F"/>
    <property type="match status" value="1"/>
</dbReference>
<dbReference type="Gene3D" id="3.40.50.150">
    <property type="entry name" value="Vaccinia Virus protein VP39"/>
    <property type="match status" value="1"/>
</dbReference>
<dbReference type="HAMAP" id="MF_01848">
    <property type="entry name" value="23SrRNA_methyltr_F"/>
    <property type="match status" value="1"/>
</dbReference>
<dbReference type="InterPro" id="IPR010286">
    <property type="entry name" value="METTL16/RlmF"/>
</dbReference>
<dbReference type="InterPro" id="IPR016909">
    <property type="entry name" value="rRNA_lsu_MeTfrase_F"/>
</dbReference>
<dbReference type="InterPro" id="IPR029063">
    <property type="entry name" value="SAM-dependent_MTases_sf"/>
</dbReference>
<dbReference type="NCBIfam" id="NF008725">
    <property type="entry name" value="PRK11727.1"/>
    <property type="match status" value="1"/>
</dbReference>
<dbReference type="PANTHER" id="PTHR13393:SF0">
    <property type="entry name" value="RNA N6-ADENOSINE-METHYLTRANSFERASE METTL16"/>
    <property type="match status" value="1"/>
</dbReference>
<dbReference type="PANTHER" id="PTHR13393">
    <property type="entry name" value="SAM-DEPENDENT METHYLTRANSFERASE"/>
    <property type="match status" value="1"/>
</dbReference>
<dbReference type="Pfam" id="PF05971">
    <property type="entry name" value="Methyltransf_10"/>
    <property type="match status" value="1"/>
</dbReference>
<dbReference type="PIRSF" id="PIRSF029038">
    <property type="entry name" value="Mtase_YbiN_prd"/>
    <property type="match status" value="1"/>
</dbReference>
<dbReference type="SUPFAM" id="SSF53335">
    <property type="entry name" value="S-adenosyl-L-methionine-dependent methyltransferases"/>
    <property type="match status" value="1"/>
</dbReference>
<reference key="1">
    <citation type="journal article" date="2001" name="Nature">
        <title>Complete genome sequence of Salmonella enterica serovar Typhimurium LT2.</title>
        <authorList>
            <person name="McClelland M."/>
            <person name="Sanderson K.E."/>
            <person name="Spieth J."/>
            <person name="Clifton S.W."/>
            <person name="Latreille P."/>
            <person name="Courtney L."/>
            <person name="Porwollik S."/>
            <person name="Ali J."/>
            <person name="Dante M."/>
            <person name="Du F."/>
            <person name="Hou S."/>
            <person name="Layman D."/>
            <person name="Leonard S."/>
            <person name="Nguyen C."/>
            <person name="Scott K."/>
            <person name="Holmes A."/>
            <person name="Grewal N."/>
            <person name="Mulvaney E."/>
            <person name="Ryan E."/>
            <person name="Sun H."/>
            <person name="Florea L."/>
            <person name="Miller W."/>
            <person name="Stoneking T."/>
            <person name="Nhan M."/>
            <person name="Waterston R."/>
            <person name="Wilson R.K."/>
        </authorList>
    </citation>
    <scope>NUCLEOTIDE SEQUENCE [LARGE SCALE GENOMIC DNA]</scope>
    <source>
        <strain>LT2 / SGSC1412 / ATCC 700720</strain>
    </source>
</reference>
<feature type="chain" id="PRO_0000349948" description="Ribosomal RNA large subunit methyltransferase F">
    <location>
        <begin position="1"/>
        <end position="308"/>
    </location>
</feature>
<keyword id="KW-0963">Cytoplasm</keyword>
<keyword id="KW-0489">Methyltransferase</keyword>
<keyword id="KW-1185">Reference proteome</keyword>
<keyword id="KW-0698">rRNA processing</keyword>
<keyword id="KW-0949">S-adenosyl-L-methionine</keyword>
<keyword id="KW-0808">Transferase</keyword>
<evidence type="ECO:0000255" key="1">
    <source>
        <dbReference type="HAMAP-Rule" id="MF_01848"/>
    </source>
</evidence>
<gene>
    <name evidence="1" type="primary">rlmF</name>
    <name type="ordered locus">STM0826</name>
</gene>
<comment type="function">
    <text evidence="1">Specifically methylates the adenine in position 1618 of 23S rRNA.</text>
</comment>
<comment type="catalytic activity">
    <reaction evidence="1">
        <text>adenosine(1618) in 23S rRNA + S-adenosyl-L-methionine = N(6)-methyladenosine(1618) in 23S rRNA + S-adenosyl-L-homocysteine + H(+)</text>
        <dbReference type="Rhea" id="RHEA:16497"/>
        <dbReference type="Rhea" id="RHEA-COMP:10229"/>
        <dbReference type="Rhea" id="RHEA-COMP:10231"/>
        <dbReference type="ChEBI" id="CHEBI:15378"/>
        <dbReference type="ChEBI" id="CHEBI:57856"/>
        <dbReference type="ChEBI" id="CHEBI:59789"/>
        <dbReference type="ChEBI" id="CHEBI:74411"/>
        <dbReference type="ChEBI" id="CHEBI:74449"/>
        <dbReference type="EC" id="2.1.1.181"/>
    </reaction>
</comment>
<comment type="subcellular location">
    <subcellularLocation>
        <location evidence="1">Cytoplasm</location>
    </subcellularLocation>
</comment>
<comment type="similarity">
    <text evidence="1">Belongs to the methyltransferase superfamily. METTL16/RlmF family.</text>
</comment>
<sequence length="308" mass="34310">MSAQKPGLHPRNRHQHRYDLAALCQTTPELTSFLIRTPAGEQSVDFANPQAVKALNKALLAHFYAVTHWDIPPGFLCPPVPGRADYIHHLADLLGETTGSIPAQATILDVGVGANCIYPLIGVHEYGWRFTGSEVSDAAMSSAQAIIQANTGLSRAIRLRRQKDPAAIFTGIIHKNEFYDATLCNPPFHDSAAAARAGSERKRRNLGQNKDDALNFGGQQQELWCEGGEVAFIKKMIAESQSFRRQVLWFTTLVSRGENLPPLYRALTEAGAVKVVKKEMAQGQKQSRFIAWTFMDDDQRRRFITRKR</sequence>
<organism>
    <name type="scientific">Salmonella typhimurium (strain LT2 / SGSC1412 / ATCC 700720)</name>
    <dbReference type="NCBI Taxonomy" id="99287"/>
    <lineage>
        <taxon>Bacteria</taxon>
        <taxon>Pseudomonadati</taxon>
        <taxon>Pseudomonadota</taxon>
        <taxon>Gammaproteobacteria</taxon>
        <taxon>Enterobacterales</taxon>
        <taxon>Enterobacteriaceae</taxon>
        <taxon>Salmonella</taxon>
    </lineage>
</organism>
<protein>
    <recommendedName>
        <fullName evidence="1">Ribosomal RNA large subunit methyltransferase F</fullName>
        <ecNumber evidence="1">2.1.1.181</ecNumber>
    </recommendedName>
    <alternativeName>
        <fullName evidence="1">23S rRNA mA1618 methyltransferase</fullName>
    </alternativeName>
    <alternativeName>
        <fullName evidence="1">rRNA adenine N-6-methyltransferase</fullName>
    </alternativeName>
</protein>
<accession>Q8ZQN4</accession>
<proteinExistence type="inferred from homology"/>
<name>RLMF_SALTY</name>